<organism>
    <name type="scientific">Listeria monocytogenes serotype 4b (strain F2365)</name>
    <dbReference type="NCBI Taxonomy" id="265669"/>
    <lineage>
        <taxon>Bacteria</taxon>
        <taxon>Bacillati</taxon>
        <taxon>Bacillota</taxon>
        <taxon>Bacilli</taxon>
        <taxon>Bacillales</taxon>
        <taxon>Listeriaceae</taxon>
        <taxon>Listeria</taxon>
    </lineage>
</organism>
<gene>
    <name evidence="1" type="primary">ldh1</name>
    <name type="ordered locus">LMOf2365_0221</name>
</gene>
<protein>
    <recommendedName>
        <fullName evidence="1">L-lactate dehydrogenase 1</fullName>
        <shortName evidence="1">L-LDH 1</shortName>
        <ecNumber evidence="1">1.1.1.27</ecNumber>
    </recommendedName>
</protein>
<reference key="1">
    <citation type="journal article" date="2004" name="Nucleic Acids Res.">
        <title>Whole genome comparisons of serotype 4b and 1/2a strains of the food-borne pathogen Listeria monocytogenes reveal new insights into the core genome components of this species.</title>
        <authorList>
            <person name="Nelson K.E."/>
            <person name="Fouts D.E."/>
            <person name="Mongodin E.F."/>
            <person name="Ravel J."/>
            <person name="DeBoy R.T."/>
            <person name="Kolonay J.F."/>
            <person name="Rasko D.A."/>
            <person name="Angiuoli S.V."/>
            <person name="Gill S.R."/>
            <person name="Paulsen I.T."/>
            <person name="Peterson J.D."/>
            <person name="White O."/>
            <person name="Nelson W.C."/>
            <person name="Nierman W.C."/>
            <person name="Beanan M.J."/>
            <person name="Brinkac L.M."/>
            <person name="Daugherty S.C."/>
            <person name="Dodson R.J."/>
            <person name="Durkin A.S."/>
            <person name="Madupu R."/>
            <person name="Haft D.H."/>
            <person name="Selengut J."/>
            <person name="Van Aken S.E."/>
            <person name="Khouri H.M."/>
            <person name="Fedorova N."/>
            <person name="Forberger H.A."/>
            <person name="Tran B."/>
            <person name="Kathariou S."/>
            <person name="Wonderling L.D."/>
            <person name="Uhlich G.A."/>
            <person name="Bayles D.O."/>
            <person name="Luchansky J.B."/>
            <person name="Fraser C.M."/>
        </authorList>
    </citation>
    <scope>NUCLEOTIDE SEQUENCE [LARGE SCALE GENOMIC DNA]</scope>
    <source>
        <strain>F2365</strain>
    </source>
</reference>
<keyword id="KW-0021">Allosteric enzyme</keyword>
<keyword id="KW-0963">Cytoplasm</keyword>
<keyword id="KW-0520">NAD</keyword>
<keyword id="KW-0560">Oxidoreductase</keyword>
<keyword id="KW-0597">Phosphoprotein</keyword>
<proteinExistence type="inferred from homology"/>
<name>LDH1_LISMF</name>
<evidence type="ECO:0000255" key="1">
    <source>
        <dbReference type="HAMAP-Rule" id="MF_00488"/>
    </source>
</evidence>
<accession>Q724K3</accession>
<dbReference type="EC" id="1.1.1.27" evidence="1"/>
<dbReference type="EMBL" id="AE017262">
    <property type="protein sequence ID" value="AAT03008.1"/>
    <property type="molecule type" value="Genomic_DNA"/>
</dbReference>
<dbReference type="RefSeq" id="WP_003722739.1">
    <property type="nucleotide sequence ID" value="NC_002973.6"/>
</dbReference>
<dbReference type="SMR" id="Q724K3"/>
<dbReference type="KEGG" id="lmf:LMOf2365_0221"/>
<dbReference type="HOGENOM" id="CLU_045401_1_1_9"/>
<dbReference type="UniPathway" id="UPA00554">
    <property type="reaction ID" value="UER00611"/>
</dbReference>
<dbReference type="GO" id="GO:0005737">
    <property type="term" value="C:cytoplasm"/>
    <property type="evidence" value="ECO:0007669"/>
    <property type="project" value="UniProtKB-SubCell"/>
</dbReference>
<dbReference type="GO" id="GO:0004459">
    <property type="term" value="F:L-lactate dehydrogenase activity"/>
    <property type="evidence" value="ECO:0007669"/>
    <property type="project" value="UniProtKB-UniRule"/>
</dbReference>
<dbReference type="GO" id="GO:0006096">
    <property type="term" value="P:glycolytic process"/>
    <property type="evidence" value="ECO:0007669"/>
    <property type="project" value="UniProtKB-UniRule"/>
</dbReference>
<dbReference type="GO" id="GO:0006089">
    <property type="term" value="P:lactate metabolic process"/>
    <property type="evidence" value="ECO:0007669"/>
    <property type="project" value="TreeGrafter"/>
</dbReference>
<dbReference type="CDD" id="cd05291">
    <property type="entry name" value="HicDH_like"/>
    <property type="match status" value="1"/>
</dbReference>
<dbReference type="FunFam" id="3.40.50.720:FF:000018">
    <property type="entry name" value="Malate dehydrogenase"/>
    <property type="match status" value="1"/>
</dbReference>
<dbReference type="Gene3D" id="3.90.110.10">
    <property type="entry name" value="Lactate dehydrogenase/glycoside hydrolase, family 4, C-terminal"/>
    <property type="match status" value="1"/>
</dbReference>
<dbReference type="Gene3D" id="3.40.50.720">
    <property type="entry name" value="NAD(P)-binding Rossmann-like Domain"/>
    <property type="match status" value="1"/>
</dbReference>
<dbReference type="HAMAP" id="MF_00488">
    <property type="entry name" value="Lactate_dehydrog"/>
    <property type="match status" value="1"/>
</dbReference>
<dbReference type="InterPro" id="IPR001557">
    <property type="entry name" value="L-lactate/malate_DH"/>
</dbReference>
<dbReference type="InterPro" id="IPR011304">
    <property type="entry name" value="L-lactate_DH"/>
</dbReference>
<dbReference type="InterPro" id="IPR018177">
    <property type="entry name" value="L-lactate_DH_AS"/>
</dbReference>
<dbReference type="InterPro" id="IPR022383">
    <property type="entry name" value="Lactate/malate_DH_C"/>
</dbReference>
<dbReference type="InterPro" id="IPR001236">
    <property type="entry name" value="Lactate/malate_DH_N"/>
</dbReference>
<dbReference type="InterPro" id="IPR015955">
    <property type="entry name" value="Lactate_DH/Glyco_Ohase_4_C"/>
</dbReference>
<dbReference type="InterPro" id="IPR036291">
    <property type="entry name" value="NAD(P)-bd_dom_sf"/>
</dbReference>
<dbReference type="NCBIfam" id="TIGR01771">
    <property type="entry name" value="L-LDH-NAD"/>
    <property type="match status" value="1"/>
</dbReference>
<dbReference type="NCBIfam" id="NF000824">
    <property type="entry name" value="PRK00066.1"/>
    <property type="match status" value="1"/>
</dbReference>
<dbReference type="NCBIfam" id="NF004863">
    <property type="entry name" value="PRK06223.1"/>
    <property type="match status" value="1"/>
</dbReference>
<dbReference type="PANTHER" id="PTHR43128">
    <property type="entry name" value="L-2-HYDROXYCARBOXYLATE DEHYDROGENASE (NAD(P)(+))"/>
    <property type="match status" value="1"/>
</dbReference>
<dbReference type="PANTHER" id="PTHR43128:SF16">
    <property type="entry name" value="L-LACTATE DEHYDROGENASE"/>
    <property type="match status" value="1"/>
</dbReference>
<dbReference type="Pfam" id="PF02866">
    <property type="entry name" value="Ldh_1_C"/>
    <property type="match status" value="1"/>
</dbReference>
<dbReference type="Pfam" id="PF00056">
    <property type="entry name" value="Ldh_1_N"/>
    <property type="match status" value="1"/>
</dbReference>
<dbReference type="PIRSF" id="PIRSF000102">
    <property type="entry name" value="Lac_mal_DH"/>
    <property type="match status" value="1"/>
</dbReference>
<dbReference type="PRINTS" id="PR00086">
    <property type="entry name" value="LLDHDRGNASE"/>
</dbReference>
<dbReference type="SUPFAM" id="SSF56327">
    <property type="entry name" value="LDH C-terminal domain-like"/>
    <property type="match status" value="1"/>
</dbReference>
<dbReference type="SUPFAM" id="SSF51735">
    <property type="entry name" value="NAD(P)-binding Rossmann-fold domains"/>
    <property type="match status" value="1"/>
</dbReference>
<dbReference type="PROSITE" id="PS00064">
    <property type="entry name" value="L_LDH"/>
    <property type="match status" value="1"/>
</dbReference>
<comment type="function">
    <text evidence="1">Catalyzes the conversion of lactate to pyruvate.</text>
</comment>
<comment type="catalytic activity">
    <reaction evidence="1">
        <text>(S)-lactate + NAD(+) = pyruvate + NADH + H(+)</text>
        <dbReference type="Rhea" id="RHEA:23444"/>
        <dbReference type="ChEBI" id="CHEBI:15361"/>
        <dbReference type="ChEBI" id="CHEBI:15378"/>
        <dbReference type="ChEBI" id="CHEBI:16651"/>
        <dbReference type="ChEBI" id="CHEBI:57540"/>
        <dbReference type="ChEBI" id="CHEBI:57945"/>
        <dbReference type="EC" id="1.1.1.27"/>
    </reaction>
</comment>
<comment type="activity regulation">
    <text evidence="1">Allosterically activated by fructose 1,6-bisphosphate (FBP).</text>
</comment>
<comment type="pathway">
    <text evidence="1">Fermentation; pyruvate fermentation to lactate; (S)-lactate from pyruvate: step 1/1.</text>
</comment>
<comment type="subunit">
    <text evidence="1">Homotetramer.</text>
</comment>
<comment type="subcellular location">
    <subcellularLocation>
        <location evidence="1">Cytoplasm</location>
    </subcellularLocation>
</comment>
<comment type="similarity">
    <text evidence="1">Belongs to the LDH/MDH superfamily. LDH family.</text>
</comment>
<sequence>MKDHQKIILVGDGAVGSSYAFACVNLSIGQEFGIIDIDKDRTIGDAMDLSHAVPFSTPKKIYSANYSDCHDADLVVVTAGTAQKPGETRLDLVNRNIKIMKGIVDEVMASGFDGIFLIASNPVDILTYATWKFSGLPKERVIGSGTSLDTARFRMSIADYLKVDARNVHGYILGEHGDTEFPAWSHTTVGGLPITEWISEDEQGAMDTIFVSVRDAAYEIINKKGATFYGVAAALARITKAILNNENAILPLSVYLDGHYGMNDIYIGAPAVVNRQGVRHIVEMNLNDKEKEQMKNSADTLKKVLDDAMKQID</sequence>
<feature type="chain" id="PRO_0000168363" description="L-lactate dehydrogenase 1">
    <location>
        <begin position="1"/>
        <end position="313"/>
    </location>
</feature>
<feature type="active site" description="Proton acceptor" evidence="1">
    <location>
        <position position="176"/>
    </location>
</feature>
<feature type="binding site" evidence="1">
    <location>
        <position position="15"/>
    </location>
    <ligand>
        <name>NAD(+)</name>
        <dbReference type="ChEBI" id="CHEBI:57540"/>
    </ligand>
</feature>
<feature type="binding site" evidence="1">
    <location>
        <position position="36"/>
    </location>
    <ligand>
        <name>NAD(+)</name>
        <dbReference type="ChEBI" id="CHEBI:57540"/>
    </ligand>
</feature>
<feature type="binding site" evidence="1">
    <location>
        <position position="41"/>
    </location>
    <ligand>
        <name>NAD(+)</name>
        <dbReference type="ChEBI" id="CHEBI:57540"/>
    </ligand>
</feature>
<feature type="binding site" evidence="1">
    <location>
        <position position="66"/>
    </location>
    <ligand>
        <name>NAD(+)</name>
        <dbReference type="ChEBI" id="CHEBI:57540"/>
    </ligand>
</feature>
<feature type="binding site" evidence="1">
    <location>
        <position position="83"/>
    </location>
    <ligand>
        <name>substrate</name>
    </ligand>
</feature>
<feature type="binding site" evidence="1">
    <location>
        <position position="89"/>
    </location>
    <ligand>
        <name>substrate</name>
    </ligand>
</feature>
<feature type="binding site" evidence="1">
    <location>
        <begin position="119"/>
        <end position="121"/>
    </location>
    <ligand>
        <name>NAD(+)</name>
        <dbReference type="ChEBI" id="CHEBI:57540"/>
    </ligand>
</feature>
<feature type="binding site" evidence="1">
    <location>
        <begin position="121"/>
        <end position="124"/>
    </location>
    <ligand>
        <name>substrate</name>
    </ligand>
</feature>
<feature type="binding site" evidence="1">
    <location>
        <position position="144"/>
    </location>
    <ligand>
        <name>NAD(+)</name>
        <dbReference type="ChEBI" id="CHEBI:57540"/>
    </ligand>
</feature>
<feature type="binding site" evidence="1">
    <location>
        <begin position="149"/>
        <end position="152"/>
    </location>
    <ligand>
        <name>substrate</name>
    </ligand>
</feature>
<feature type="binding site" evidence="1">
    <location>
        <position position="154"/>
    </location>
    <ligand>
        <name>beta-D-fructose 1,6-bisphosphate</name>
        <dbReference type="ChEBI" id="CHEBI:32966"/>
        <note>allosteric activator</note>
    </ligand>
</feature>
<feature type="binding site" evidence="1">
    <location>
        <position position="169"/>
    </location>
    <ligand>
        <name>beta-D-fructose 1,6-bisphosphate</name>
        <dbReference type="ChEBI" id="CHEBI:32966"/>
        <note>allosteric activator</note>
    </ligand>
</feature>
<feature type="binding site" evidence="1">
    <location>
        <position position="227"/>
    </location>
    <ligand>
        <name>substrate</name>
    </ligand>
</feature>
<feature type="modified residue" description="Phosphotyrosine" evidence="1">
    <location>
        <position position="218"/>
    </location>
</feature>